<feature type="chain" id="PRO_0000453681" description="dATP triphosphohydrolase">
    <location>
        <begin position="1"/>
        <end position="203"/>
    </location>
</feature>
<feature type="binding site" evidence="1">
    <location>
        <position position="17"/>
    </location>
    <ligand>
        <name>dATP</name>
        <dbReference type="ChEBI" id="CHEBI:61404"/>
    </ligand>
</feature>
<feature type="binding site" evidence="1">
    <location>
        <position position="31"/>
    </location>
    <ligand>
        <name>Co(2+)</name>
        <dbReference type="ChEBI" id="CHEBI:48828"/>
        <label>1</label>
        <note>catalytic</note>
    </ligand>
</feature>
<feature type="binding site" evidence="1">
    <location>
        <position position="73"/>
    </location>
    <ligand>
        <name>Co(2+)</name>
        <dbReference type="ChEBI" id="CHEBI:48828"/>
        <label>1</label>
        <note>catalytic</note>
    </ligand>
</feature>
<feature type="binding site" evidence="1">
    <location>
        <position position="74"/>
    </location>
    <ligand>
        <name>Co(2+)</name>
        <dbReference type="ChEBI" id="CHEBI:48828"/>
        <label>1</label>
        <note>catalytic</note>
    </ligand>
</feature>
<feature type="binding site" evidence="1">
    <location>
        <position position="77"/>
    </location>
    <ligand>
        <name>Co(2+)</name>
        <dbReference type="ChEBI" id="CHEBI:48828"/>
        <label>2</label>
        <note>catalytic</note>
    </ligand>
</feature>
<feature type="binding site" evidence="1">
    <location>
        <position position="82"/>
    </location>
    <ligand>
        <name>Co(2+)</name>
        <dbReference type="ChEBI" id="CHEBI:48828"/>
        <label>2</label>
        <note>catalytic</note>
    </ligand>
</feature>
<feature type="binding site" evidence="1">
    <location>
        <position position="130"/>
    </location>
    <ligand>
        <name>Co(2+)</name>
        <dbReference type="ChEBI" id="CHEBI:48828"/>
        <label>1</label>
        <note>catalytic</note>
    </ligand>
</feature>
<accession>A0A2H5BHG9</accession>
<protein>
    <recommendedName>
        <fullName evidence="3">dATP triphosphohydrolase</fullName>
        <shortName evidence="3">dATPase</shortName>
    </recommendedName>
</protein>
<gene>
    <name type="primary">datZ</name>
    <name type="ORF">SHab15497_00041</name>
</gene>
<proteinExistence type="evidence at protein level"/>
<evidence type="ECO:0000250" key="1">
    <source>
        <dbReference type="UniProtKB" id="A0A7U3TCA2"/>
    </source>
</evidence>
<evidence type="ECO:0000269" key="2">
    <source>
    </source>
</evidence>
<evidence type="ECO:0000303" key="3">
    <source>
    </source>
</evidence>
<evidence type="ECO:0000305" key="4"/>
<sequence length="203" mass="23094">MDKLNIRDILRAQDVTRWQIVRTKKQSVAEHTFAVQAVLMRLVPLLISTYTAPMKVGFEERLLCECIMGAFWHDIPEVITGDIASPVKRLIRDGGDITPLDDLEKKVDPAFIKCYTAAKPLTLAIIKCADLMEMVYHLNEYGDQRANSHSWRVQHGINNAFHEHIHNCSENFPAFKWDVAHGLLIEMLDPSQETDIDSIVNGI</sequence>
<keyword id="KW-0170">Cobalt</keyword>
<keyword id="KW-0378">Hydrolase</keyword>
<keyword id="KW-0479">Metal-binding</keyword>
<keyword id="KW-0547">Nucleotide-binding</keyword>
<keyword id="KW-1185">Reference proteome</keyword>
<organism>
    <name type="scientific">Acinetobacter phage SH-Ab 15497</name>
    <dbReference type="NCBI Taxonomy" id="2060946"/>
    <lineage>
        <taxon>Viruses</taxon>
        <taxon>Duplodnaviria</taxon>
        <taxon>Heunggongvirae</taxon>
        <taxon>Uroviricota</taxon>
        <taxon>Caudoviricetes</taxon>
    </lineage>
</organism>
<name>DATPH_BPSHA</name>
<dbReference type="EMBL" id="MG674163">
    <property type="protein sequence ID" value="AUG85483.1"/>
    <property type="molecule type" value="Genomic_DNA"/>
</dbReference>
<dbReference type="SMR" id="A0A2H5BHG9"/>
<dbReference type="Proteomes" id="UP000241732">
    <property type="component" value="Genome"/>
</dbReference>
<dbReference type="GO" id="GO:0016787">
    <property type="term" value="F:hydrolase activity"/>
    <property type="evidence" value="ECO:0000314"/>
    <property type="project" value="UniProtKB"/>
</dbReference>
<dbReference type="GO" id="GO:0046872">
    <property type="term" value="F:metal ion binding"/>
    <property type="evidence" value="ECO:0007669"/>
    <property type="project" value="UniProtKB-KW"/>
</dbReference>
<dbReference type="GO" id="GO:0000166">
    <property type="term" value="F:nucleotide binding"/>
    <property type="evidence" value="ECO:0007669"/>
    <property type="project" value="UniProtKB-KW"/>
</dbReference>
<dbReference type="Gene3D" id="1.10.3210.10">
    <property type="entry name" value="Hypothetical protein af1432"/>
    <property type="match status" value="1"/>
</dbReference>
<dbReference type="Pfam" id="PF12917">
    <property type="entry name" value="YfbR-like"/>
    <property type="match status" value="1"/>
</dbReference>
<dbReference type="SUPFAM" id="SSF109604">
    <property type="entry name" value="HD-domain/PDEase-like"/>
    <property type="match status" value="1"/>
</dbReference>
<organismHost>
    <name type="scientific">Acinetobacter baumannii</name>
    <dbReference type="NCBI Taxonomy" id="470"/>
</organismHost>
<reference key="1">
    <citation type="journal article" date="2019" name="Acta Biochim. Biophys. Sin.">
        <title>Characterization and whole genome analysis of a novel bacteriophage SH-Ab 15497 against multidrug resistant Acinetobacater baummanii.</title>
        <authorList>
            <person name="Hua Y."/>
            <person name="Xu M."/>
            <person name="Wang R."/>
            <person name="Zhang Y."/>
            <person name="Zhu Z."/>
            <person name="Guo M."/>
            <person name="He P."/>
        </authorList>
    </citation>
    <scope>NUCLEOTIDE SEQUENCE [LARGE SCALE GENOMIC DNA]</scope>
</reference>
<reference key="2">
    <citation type="journal article" date="2021" name="Science">
        <title>A widespread pathway for substitution of adenine by diaminopurine in phage genomes.</title>
        <authorList>
            <person name="Zhou Y."/>
            <person name="Xu X."/>
            <person name="Wei Y."/>
            <person name="Cheng Y."/>
            <person name="Guo Y."/>
            <person name="Khudyakov I."/>
            <person name="Liu F."/>
            <person name="He P."/>
            <person name="Song Z."/>
            <person name="Li Z."/>
            <person name="Gao Y."/>
            <person name="Ang E.L."/>
            <person name="Zhao H."/>
            <person name="Zhang Y."/>
            <person name="Zhao S."/>
        </authorList>
    </citation>
    <scope>FUNCTION</scope>
    <scope>CATALYTIC ACTIVITY</scope>
    <scope>COFACTOR</scope>
</reference>
<comment type="function">
    <text evidence="2">Catalyzes the hydrolysis of dATP, dADP and dAMP into dA (PubMed:33926954). This step is essential for Z-genome synthesis (containing aminoadenine instead of adenine). Specifically removes dATP and its precursor dADP from the nucleotide pool of the host, preventing the incorporation of A into the phage genome and favoring the integration of the Z-base into the viral genome (PubMed:33926954).</text>
</comment>
<comment type="catalytic activity">
    <reaction evidence="2">
        <text>dATP + H2O = 2'-deoxyadenosine + triphosphate + H(+)</text>
        <dbReference type="Rhea" id="RHEA:67648"/>
        <dbReference type="ChEBI" id="CHEBI:15377"/>
        <dbReference type="ChEBI" id="CHEBI:15378"/>
        <dbReference type="ChEBI" id="CHEBI:17256"/>
        <dbReference type="ChEBI" id="CHEBI:18036"/>
        <dbReference type="ChEBI" id="CHEBI:61404"/>
    </reaction>
</comment>
<comment type="catalytic activity">
    <reaction evidence="2">
        <text>dADP + H2O = 2'-deoxyadenosine + diphosphate</text>
        <dbReference type="Rhea" id="RHEA:67652"/>
        <dbReference type="ChEBI" id="CHEBI:15377"/>
        <dbReference type="ChEBI" id="CHEBI:17256"/>
        <dbReference type="ChEBI" id="CHEBI:33019"/>
        <dbReference type="ChEBI" id="CHEBI:57667"/>
    </reaction>
</comment>
<comment type="catalytic activity">
    <reaction evidence="2">
        <text>dAMP + H2O = 2'-deoxyadenosine + phosphate</text>
        <dbReference type="Rhea" id="RHEA:29371"/>
        <dbReference type="ChEBI" id="CHEBI:15377"/>
        <dbReference type="ChEBI" id="CHEBI:17256"/>
        <dbReference type="ChEBI" id="CHEBI:43474"/>
        <dbReference type="ChEBI" id="CHEBI:58245"/>
    </reaction>
</comment>
<comment type="cofactor">
    <cofactor evidence="2">
        <name>Co(2+)</name>
        <dbReference type="ChEBI" id="CHEBI:48828"/>
    </cofactor>
    <text evidence="1">Uses a typical 2 metal-ion mechanism to dephosphorylate dATP.</text>
</comment>
<comment type="similarity">
    <text evidence="4">Belongs to the Caudovirales dATP triphosphohydrolase family.</text>
</comment>